<organism>
    <name type="scientific">Rattus norvegicus</name>
    <name type="common">Rat</name>
    <dbReference type="NCBI Taxonomy" id="10116"/>
    <lineage>
        <taxon>Eukaryota</taxon>
        <taxon>Metazoa</taxon>
        <taxon>Chordata</taxon>
        <taxon>Craniata</taxon>
        <taxon>Vertebrata</taxon>
        <taxon>Euteleostomi</taxon>
        <taxon>Mammalia</taxon>
        <taxon>Eutheria</taxon>
        <taxon>Euarchontoglires</taxon>
        <taxon>Glires</taxon>
        <taxon>Rodentia</taxon>
        <taxon>Myomorpha</taxon>
        <taxon>Muroidea</taxon>
        <taxon>Muridae</taxon>
        <taxon>Murinae</taxon>
        <taxon>Rattus</taxon>
    </lineage>
</organism>
<gene>
    <name type="primary">Podxl</name>
    <name type="synonym">Pclp1</name>
</gene>
<evidence type="ECO:0000250" key="1"/>
<evidence type="ECO:0000250" key="2">
    <source>
        <dbReference type="UniProtKB" id="O00592"/>
    </source>
</evidence>
<evidence type="ECO:0000250" key="3">
    <source>
        <dbReference type="UniProtKB" id="Q9R0M4"/>
    </source>
</evidence>
<evidence type="ECO:0000255" key="4"/>
<evidence type="ECO:0000256" key="5">
    <source>
        <dbReference type="SAM" id="MobiDB-lite"/>
    </source>
</evidence>
<evidence type="ECO:0000269" key="6">
    <source>
    </source>
</evidence>
<evidence type="ECO:0000269" key="7">
    <source>
    </source>
</evidence>
<evidence type="ECO:0000305" key="8"/>
<proteinExistence type="evidence at protein level"/>
<keyword id="KW-0130">Cell adhesion</keyword>
<keyword id="KW-1003">Cell membrane</keyword>
<keyword id="KW-0966">Cell projection</keyword>
<keyword id="KW-0325">Glycoprotein</keyword>
<keyword id="KW-0472">Membrane</keyword>
<keyword id="KW-0597">Phosphoprotein</keyword>
<keyword id="KW-1185">Reference proteome</keyword>
<keyword id="KW-0732">Signal</keyword>
<keyword id="KW-0812">Transmembrane</keyword>
<keyword id="KW-1133">Transmembrane helix</keyword>
<accession>Q9WTQ2</accession>
<accession>Q6IRK7</accession>
<accession>Q9R068</accession>
<reference key="1">
    <citation type="submission" date="1998-12" db="EMBL/GenBank/DDBJ databases">
        <title>Rat podocalyxin.</title>
        <authorList>
            <person name="Kobayashi T."/>
        </authorList>
    </citation>
    <scope>NUCLEOTIDE SEQUENCE [MRNA]</scope>
</reference>
<reference key="2">
    <citation type="journal article" date="2000" name="Mol. Biol. Cell">
        <title>Expression of podocalyxin inhibits cell-cell adhesion and modifies junctional properties in Madin-Darby canine kidney cells.</title>
        <authorList>
            <person name="Takeda T."/>
            <person name="Go W.Y."/>
            <person name="Orlando R.A."/>
            <person name="Farquhar M.G."/>
        </authorList>
    </citation>
    <scope>NUCLEOTIDE SEQUENCE [MRNA]</scope>
    <scope>FUNCTION</scope>
</reference>
<reference key="3">
    <citation type="journal article" date="2004" name="Genome Res.">
        <title>The status, quality, and expansion of the NIH full-length cDNA project: the Mammalian Gene Collection (MGC).</title>
        <authorList>
            <consortium name="The MGC Project Team"/>
        </authorList>
    </citation>
    <scope>NUCLEOTIDE SEQUENCE [LARGE SCALE MRNA]</scope>
    <source>
        <tissue>Lung</tissue>
    </source>
</reference>
<reference key="4">
    <citation type="journal article" date="2001" name="J. Clin. Invest.">
        <title>Loss of glomerular foot processes is associated with uncoupling of podocalyxin from the actin cytoskeleton.</title>
        <authorList>
            <person name="Takeda T."/>
            <person name="McQuistan T."/>
            <person name="Orlando R.A."/>
            <person name="Farquhar M.G."/>
        </authorList>
    </citation>
    <scope>INTERACTION WITH EZR; NHERF1 AND NHERF2</scope>
    <scope>SUBCELLULAR LOCATION</scope>
    <scope>TISSUE SPECIFICITY</scope>
</reference>
<comment type="function">
    <text evidence="6">Involved in the regulation of both adhesion and cell morphology and cancer progression. Functions as an anti-adhesive molecule that maintains an open filtration pathway between neighboring foot processes in the podocyte by charge repulsion. Acts as a pro-adhesive molecule, enhancing the adherence of cells to immobilized ligands, increasing the rate of migration and cell-cell contacts in an integrin-dependent manner. Induces the formation of apical actin-dependent microvilli. Involved in the formation of a preapical plasma membrane subdomain to set up initial epithelial polarization and the apical lumen formation during renal tubulogenesis. Plays a role in cancer development and aggressiveness by inducing cell migration and invasion through its interaction with the actin-binding protein EZR. Affects EZR-dependent signaling events, leading to increased activities of the MAPK and PI3K pathways in cancer cells.</text>
</comment>
<comment type="subunit">
    <text evidence="1 7">Monomer; when associated with the membrane raft. Oligomer; when integrated in the apical membrane. Interacts with NHERF2. Interacts (via the C-terminal PDZ-binding motif DTHL) with NHERF1 (via the PDZ domains); the interaction take place early in the secretory pathway and is necessary for its apical membrane sorting (By similarity). Found in a complex with EZR, PODXL and NHERF2. Associates with the actin cytoskeleton through complex formation with EZR and NHERF2. Interacts (via the C-terminal PDZ-binding motif DTHL) with NHERF1 (via the PDZ domains); interaction is not detected in glomerular epithelium cells. Interacts (via the C-terminal PDZ-binding motif DTHL) with NHERF2 (via the PDZ 1 domain); interaction is detected in glomerular epithelium cells. Interacts with EZR.</text>
</comment>
<comment type="subcellular location">
    <subcellularLocation>
        <location evidence="7">Apical cell membrane</location>
    </subcellularLocation>
    <subcellularLocation>
        <location evidence="7">Cell projection</location>
        <location evidence="7">Microvillus</location>
    </subcellularLocation>
    <subcellularLocation>
        <location evidence="1">Membrane raft</location>
    </subcellularLocation>
    <subcellularLocation>
        <location evidence="1">Cell projection</location>
        <location evidence="1">Lamellipodium</location>
    </subcellularLocation>
    <subcellularLocation>
        <location evidence="1">Cell projection</location>
        <location evidence="1">Filopodium</location>
    </subcellularLocation>
    <subcellularLocation>
        <location evidence="1">Cell projection</location>
        <location evidence="1">Ruffle</location>
    </subcellularLocation>
    <subcellularLocation>
        <location evidence="8">Membrane</location>
        <topology evidence="8">Single-pass type I membrane protein</topology>
    </subcellularLocation>
    <text evidence="1">In single attached epithelial cells is restricted to a preapical pole on the free plasma membrane whereas other apical and basolateral proteins are not yet polarized. Colocalizes with NHERF2 at the apical plasma membrane during epithelial polarization. Colocalizes with NHERF1 at the trans-Golgi network (transiently) and at the apical plasma membrane. Its association with the membrane raft is transient. Forms granular, punctuated pattern, forming patches, preferentially adopting a polar distribution, located on the migrating poles of the cell or forming clusters along the terminal ends of filipodia establishing contact with the endothelial cells. Colocalizes with the submembrane actin of lamellipodia, particularly associated with ruffles. Colocalizes with vinculin at protrusions of cells. Colocalizes with ITGB1. Colocalizes with actin filaments, EZR and NHERF1 in a punctate pattern at the apical cell surface where microvilli form (By similarity). Colocalizes with EZR and NHERF2 at the apical cell membrane of glomerular epithelium cells. Colocalizes with PARD3, PRKCI, EXOC5, OCLN, RAB11A and RAB8A in apical membrane initiation sites (AMIS) during the generation of apical surface and luminogenesis (By similarity).</text>
</comment>
<comment type="tissue specificity">
    <text evidence="7">Glomerular epithelium cell (podocyte) (at protein level).</text>
</comment>
<comment type="domain">
    <text evidence="1">Both the O-glycan-rich domain of the extracellular domain and the C-terminus PDZ-binding motif (DTHL) in the cytoplasmic tail harbor an apical sorting signal. The cytoplasmic domain is necessary for the apical membrane targeting and renal tubulogenesis. The large highly anionic extracellular domain allows to maintain open filtration pathways between neighboring podocyte foot processes. The cytoplasmic C-terminus PDZ-binding motif (DTHL) is essential for interaction with NHERF1 and for targeting NHERF1 to the apical cell membrane. The extracellular domain is necessary for microvillus formation (By similarity).</text>
</comment>
<comment type="PTM">
    <text evidence="1">N- and O-linked glycosylated. Sialoglycoprotein (By similarity).</text>
</comment>
<comment type="similarity">
    <text evidence="8">Belongs to the podocalyxin family.</text>
</comment>
<feature type="signal peptide" evidence="4">
    <location>
        <begin position="1"/>
        <end position="24"/>
    </location>
</feature>
<feature type="chain" id="PRO_0000024757" description="Podocalyxin">
    <location>
        <begin position="25"/>
        <end position="485"/>
    </location>
</feature>
<feature type="topological domain" description="Extracellular" evidence="4">
    <location>
        <begin position="25"/>
        <end position="386"/>
    </location>
</feature>
<feature type="transmembrane region" description="Helical" evidence="4">
    <location>
        <begin position="387"/>
        <end position="407"/>
    </location>
</feature>
<feature type="topological domain" description="Cytoplasmic" evidence="4">
    <location>
        <begin position="408"/>
        <end position="485"/>
    </location>
</feature>
<feature type="region of interest" description="Disordered" evidence="5">
    <location>
        <begin position="22"/>
        <end position="267"/>
    </location>
</feature>
<feature type="compositionally biased region" description="Polar residues" evidence="5">
    <location>
        <begin position="26"/>
        <end position="57"/>
    </location>
</feature>
<feature type="compositionally biased region" description="Low complexity" evidence="5">
    <location>
        <begin position="58"/>
        <end position="109"/>
    </location>
</feature>
<feature type="compositionally biased region" description="Polar residues" evidence="5">
    <location>
        <begin position="110"/>
        <end position="128"/>
    </location>
</feature>
<feature type="compositionally biased region" description="Polar residues" evidence="5">
    <location>
        <begin position="135"/>
        <end position="149"/>
    </location>
</feature>
<feature type="compositionally biased region" description="Low complexity" evidence="5">
    <location>
        <begin position="150"/>
        <end position="161"/>
    </location>
</feature>
<feature type="compositionally biased region" description="Polar residues" evidence="5">
    <location>
        <begin position="163"/>
        <end position="176"/>
    </location>
</feature>
<feature type="compositionally biased region" description="Polar residues" evidence="5">
    <location>
        <begin position="186"/>
        <end position="228"/>
    </location>
</feature>
<feature type="compositionally biased region" description="Polar residues" evidence="5">
    <location>
        <begin position="235"/>
        <end position="253"/>
    </location>
</feature>
<feature type="compositionally biased region" description="Low complexity" evidence="5">
    <location>
        <begin position="254"/>
        <end position="267"/>
    </location>
</feature>
<feature type="modified residue" description="Phosphothreonine" evidence="3">
    <location>
        <position position="445"/>
    </location>
</feature>
<feature type="modified residue" description="Phosphoserine" evidence="2">
    <location>
        <position position="464"/>
    </location>
</feature>
<feature type="modified residue" description="Phosphothreonine" evidence="2">
    <location>
        <position position="483"/>
    </location>
</feature>
<feature type="glycosylation site" description="N-linked (GlcNAc...) asparagine" evidence="4">
    <location>
        <position position="29"/>
    </location>
</feature>
<feature type="glycosylation site" description="N-linked (GlcNAc...) asparagine" evidence="4">
    <location>
        <position position="82"/>
    </location>
</feature>
<feature type="glycosylation site" description="N-linked (GlcNAc...) asparagine" evidence="4">
    <location>
        <position position="135"/>
    </location>
</feature>
<feature type="glycosylation site" description="N-linked (GlcNAc...) asparagine" evidence="4">
    <location>
        <position position="144"/>
    </location>
</feature>
<feature type="glycosylation site" description="N-linked (GlcNAc...) asparagine" evidence="4">
    <location>
        <position position="156"/>
    </location>
</feature>
<feature type="glycosylation site" description="N-linked (GlcNAc...) asparagine" evidence="4">
    <location>
        <position position="187"/>
    </location>
</feature>
<feature type="glycosylation site" description="N-linked (GlcNAc...) asparagine" evidence="4">
    <location>
        <position position="287"/>
    </location>
</feature>
<feature type="sequence conflict" description="In Ref. 1; BAA78375." evidence="8" ref="1">
    <original>T</original>
    <variation>S</variation>
    <location>
        <position position="130"/>
    </location>
</feature>
<feature type="sequence conflict" description="In Ref. 1; BAA78375." evidence="8" ref="1">
    <original>E</original>
    <variation>G</variation>
    <location>
        <position position="379"/>
    </location>
</feature>
<feature type="sequence conflict" description="In Ref. 1; BAA78375." evidence="8" ref="1">
    <original>N</original>
    <variation>S</variation>
    <location>
        <position position="456"/>
    </location>
</feature>
<protein>
    <recommendedName>
        <fullName>Podocalyxin</fullName>
    </recommendedName>
    <alternativeName>
        <fullName>Podocalyxin-like protein 1</fullName>
        <shortName>PC</shortName>
        <shortName>PCLP-1</shortName>
    </alternativeName>
</protein>
<name>PODXL_RAT</name>
<dbReference type="EMBL" id="AB020726">
    <property type="protein sequence ID" value="BAA78375.1"/>
    <property type="molecule type" value="mRNA"/>
</dbReference>
<dbReference type="EMBL" id="AF109393">
    <property type="protein sequence ID" value="AAF14238.1"/>
    <property type="molecule type" value="mRNA"/>
</dbReference>
<dbReference type="EMBL" id="BC070886">
    <property type="protein sequence ID" value="AAH70886.1"/>
    <property type="molecule type" value="mRNA"/>
</dbReference>
<dbReference type="RefSeq" id="NP_620203.1">
    <property type="nucleotide sequence ID" value="NM_138848.1"/>
</dbReference>
<dbReference type="RefSeq" id="XP_008760980.1">
    <property type="nucleotide sequence ID" value="XM_008762758.2"/>
</dbReference>
<dbReference type="RefSeq" id="XP_017447916.1">
    <property type="nucleotide sequence ID" value="XM_017592427.1"/>
</dbReference>
<dbReference type="CORUM" id="Q9WTQ2"/>
<dbReference type="FunCoup" id="Q9WTQ2">
    <property type="interactions" value="393"/>
</dbReference>
<dbReference type="STRING" id="10116.ENSRNOP00000016991"/>
<dbReference type="GlyCosmos" id="Q9WTQ2">
    <property type="glycosylation" value="7 sites, No reported glycans"/>
</dbReference>
<dbReference type="GlyGen" id="Q9WTQ2">
    <property type="glycosylation" value="8 sites"/>
</dbReference>
<dbReference type="iPTMnet" id="Q9WTQ2"/>
<dbReference type="PhosphoSitePlus" id="Q9WTQ2"/>
<dbReference type="SwissPalm" id="Q9WTQ2"/>
<dbReference type="jPOST" id="Q9WTQ2"/>
<dbReference type="PaxDb" id="10116-ENSRNOP00000016991"/>
<dbReference type="Ensembl" id="ENSRNOT00000077406.2">
    <property type="protein sequence ID" value="ENSRNOP00000075234.1"/>
    <property type="gene ID" value="ENSRNOG00000012495.8"/>
</dbReference>
<dbReference type="GeneID" id="192181"/>
<dbReference type="KEGG" id="rno:192181"/>
<dbReference type="UCSC" id="RGD:621878">
    <property type="organism name" value="rat"/>
</dbReference>
<dbReference type="AGR" id="RGD:621878"/>
<dbReference type="CTD" id="5420"/>
<dbReference type="RGD" id="621878">
    <property type="gene designation" value="Podxl"/>
</dbReference>
<dbReference type="eggNOG" id="ENOG502S2JU">
    <property type="taxonomic scope" value="Eukaryota"/>
</dbReference>
<dbReference type="GeneTree" id="ENSGT00730000111314"/>
<dbReference type="InParanoid" id="Q9WTQ2"/>
<dbReference type="OrthoDB" id="91748at9989"/>
<dbReference type="PhylomeDB" id="Q9WTQ2"/>
<dbReference type="TreeFam" id="TF333564"/>
<dbReference type="PRO" id="PR:Q9WTQ2"/>
<dbReference type="Proteomes" id="UP000002494">
    <property type="component" value="Chromosome 4"/>
</dbReference>
<dbReference type="Bgee" id="ENSRNOG00000012495">
    <property type="expression patterns" value="Expressed in lung and 19 other cell types or tissues"/>
</dbReference>
<dbReference type="ExpressionAtlas" id="Q9WTQ2">
    <property type="expression patterns" value="baseline and differential"/>
</dbReference>
<dbReference type="GO" id="GO:0016324">
    <property type="term" value="C:apical plasma membrane"/>
    <property type="evidence" value="ECO:0000314"/>
    <property type="project" value="UniProtKB"/>
</dbReference>
<dbReference type="GO" id="GO:0044297">
    <property type="term" value="C:cell body"/>
    <property type="evidence" value="ECO:0000314"/>
    <property type="project" value="RGD"/>
</dbReference>
<dbReference type="GO" id="GO:0005737">
    <property type="term" value="C:cytoplasm"/>
    <property type="evidence" value="ECO:0000250"/>
    <property type="project" value="UniProtKB"/>
</dbReference>
<dbReference type="GO" id="GO:0070062">
    <property type="term" value="C:extracellular exosome"/>
    <property type="evidence" value="ECO:0000266"/>
    <property type="project" value="RGD"/>
</dbReference>
<dbReference type="GO" id="GO:0030175">
    <property type="term" value="C:filopodium"/>
    <property type="evidence" value="ECO:0000250"/>
    <property type="project" value="UniProtKB"/>
</dbReference>
<dbReference type="GO" id="GO:0098978">
    <property type="term" value="C:glutamatergic synapse"/>
    <property type="evidence" value="ECO:0000266"/>
    <property type="project" value="RGD"/>
</dbReference>
<dbReference type="GO" id="GO:0030027">
    <property type="term" value="C:lamellipodium"/>
    <property type="evidence" value="ECO:0000250"/>
    <property type="project" value="UniProtKB"/>
</dbReference>
<dbReference type="GO" id="GO:0045121">
    <property type="term" value="C:membrane raft"/>
    <property type="evidence" value="ECO:0007669"/>
    <property type="project" value="UniProtKB-SubCell"/>
</dbReference>
<dbReference type="GO" id="GO:0031528">
    <property type="term" value="C:microvillus membrane"/>
    <property type="evidence" value="ECO:0000250"/>
    <property type="project" value="UniProtKB"/>
</dbReference>
<dbReference type="GO" id="GO:0005886">
    <property type="term" value="C:plasma membrane"/>
    <property type="evidence" value="ECO:0000250"/>
    <property type="project" value="UniProtKB"/>
</dbReference>
<dbReference type="GO" id="GO:0042734">
    <property type="term" value="C:presynaptic membrane"/>
    <property type="evidence" value="ECO:0000266"/>
    <property type="project" value="RGD"/>
</dbReference>
<dbReference type="GO" id="GO:0001726">
    <property type="term" value="C:ruffle"/>
    <property type="evidence" value="ECO:0000250"/>
    <property type="project" value="UniProtKB"/>
</dbReference>
<dbReference type="GO" id="GO:0036057">
    <property type="term" value="C:slit diaphragm"/>
    <property type="evidence" value="ECO:0000314"/>
    <property type="project" value="UniProtKB"/>
</dbReference>
<dbReference type="GO" id="GO:0007155">
    <property type="term" value="P:cell adhesion"/>
    <property type="evidence" value="ECO:0007669"/>
    <property type="project" value="UniProtKB-KW"/>
</dbReference>
<dbReference type="GO" id="GO:0016477">
    <property type="term" value="P:cell migration"/>
    <property type="evidence" value="ECO:0000250"/>
    <property type="project" value="UniProtKB"/>
</dbReference>
<dbReference type="GO" id="GO:0072175">
    <property type="term" value="P:epithelial tube formation"/>
    <property type="evidence" value="ECO:0000250"/>
    <property type="project" value="UniProtKB"/>
</dbReference>
<dbReference type="GO" id="GO:0003094">
    <property type="term" value="P:glomerular filtration"/>
    <property type="evidence" value="ECO:0000305"/>
    <property type="project" value="UniProtKB"/>
</dbReference>
<dbReference type="GO" id="GO:0050900">
    <property type="term" value="P:leukocyte migration"/>
    <property type="evidence" value="ECO:0000266"/>
    <property type="project" value="RGD"/>
</dbReference>
<dbReference type="GO" id="GO:0007162">
    <property type="term" value="P:negative regulation of cell adhesion"/>
    <property type="evidence" value="ECO:0000314"/>
    <property type="project" value="RGD"/>
</dbReference>
<dbReference type="GO" id="GO:0022408">
    <property type="term" value="P:negative regulation of cell-cell adhesion"/>
    <property type="evidence" value="ECO:0000250"/>
    <property type="project" value="UniProtKB"/>
</dbReference>
<dbReference type="GO" id="GO:0072015">
    <property type="term" value="P:podocyte development"/>
    <property type="evidence" value="ECO:0000270"/>
    <property type="project" value="UniProtKB"/>
</dbReference>
<dbReference type="GO" id="GO:0030335">
    <property type="term" value="P:positive regulation of cell migration"/>
    <property type="evidence" value="ECO:0000250"/>
    <property type="project" value="UniProtKB"/>
</dbReference>
<dbReference type="GO" id="GO:0033634">
    <property type="term" value="P:positive regulation of cell-cell adhesion mediated by integrin"/>
    <property type="evidence" value="ECO:0000250"/>
    <property type="project" value="UniProtKB"/>
</dbReference>
<dbReference type="GO" id="GO:0032534">
    <property type="term" value="P:regulation of microvillus assembly"/>
    <property type="evidence" value="ECO:0000250"/>
    <property type="project" value="UniProtKB"/>
</dbReference>
<dbReference type="GO" id="GO:0051963">
    <property type="term" value="P:regulation of synapse assembly"/>
    <property type="evidence" value="ECO:0000266"/>
    <property type="project" value="RGD"/>
</dbReference>
<dbReference type="InterPro" id="IPR013836">
    <property type="entry name" value="CD34/Podocalyxin"/>
</dbReference>
<dbReference type="InterPro" id="IPR017403">
    <property type="entry name" value="PODXL"/>
</dbReference>
<dbReference type="PANTHER" id="PTHR12067">
    <property type="entry name" value="PODOCALYXIN"/>
    <property type="match status" value="1"/>
</dbReference>
<dbReference type="PANTHER" id="PTHR12067:SF5">
    <property type="entry name" value="PODOCALYXIN"/>
    <property type="match status" value="1"/>
</dbReference>
<dbReference type="Pfam" id="PF06365">
    <property type="entry name" value="CD34_antigen"/>
    <property type="match status" value="1"/>
</dbReference>
<dbReference type="PIRSF" id="PIRSF038143">
    <property type="entry name" value="Podocalyxin-like_p1"/>
    <property type="match status" value="1"/>
</dbReference>
<sequence>MRPTLALSALLLLQLLLLSTPSLSQDNGNKTDTSDITSIDQNQDKPATNQPSNATPKSSVQPPTPTSISTSSPDPKATQSSNSSVTTTSDSTTDRTSSSTSTVPTTSNSGQTVSSGGKSSDKITTALPTTLGPVNASSQPTDLNTSTKLPSTPTTNSTASPHQPVSHSEGQHTTVQSSSASVSSSDNTTLLWILTTSKPTGTSEGTQPIAISTPGITTPVSTPLQPTGSPGGTESVPTTEEFTHSTSSWTPVVSQGPSTPSSTWTSGSYKLKCDPAIKPHEELLILNLTRDSFCKGSPPNERFLELLCHSAKASFKPAEDSCALELAPILDNQAVAVKRIVIETKLSPKAVFELLKDKWDDLTEAGVIDIHLGKEGPPEVNEDRFSLPLIITIVCMASFLLLVAALYGCCHQRISQRKDQQRLTEELQTVENGYHDNPTLEVMETPSEMQEKKVVNLNGELGDSWIVPLDNLTKEDLDEEEDTHL</sequence>